<proteinExistence type="evidence at protein level"/>
<dbReference type="EC" id="2.1.1.-"/>
<dbReference type="EMBL" id="AL123456">
    <property type="protein sequence ID" value="CCP43385.1"/>
    <property type="molecule type" value="Genomic_DNA"/>
</dbReference>
<dbReference type="RefSeq" id="NP_215156.1">
    <property type="nucleotide sequence ID" value="NC_000962.3"/>
</dbReference>
<dbReference type="RefSeq" id="WP_003900195.1">
    <property type="nucleotide sequence ID" value="NZ_NVQJ01000007.1"/>
</dbReference>
<dbReference type="PDB" id="2FK7">
    <property type="method" value="X-ray"/>
    <property type="resolution" value="2.10 A"/>
    <property type="chains" value="A=4-301"/>
</dbReference>
<dbReference type="PDB" id="2FK8">
    <property type="method" value="X-ray"/>
    <property type="resolution" value="2.00 A"/>
    <property type="chains" value="A=4-301"/>
</dbReference>
<dbReference type="PDB" id="3HA3">
    <property type="method" value="X-ray"/>
    <property type="resolution" value="2.20 A"/>
    <property type="chains" value="A=4-301"/>
</dbReference>
<dbReference type="PDB" id="3HA5">
    <property type="method" value="X-ray"/>
    <property type="resolution" value="2.30 A"/>
    <property type="chains" value="A=4-301"/>
</dbReference>
<dbReference type="PDB" id="3HA7">
    <property type="method" value="X-ray"/>
    <property type="resolution" value="2.35 A"/>
    <property type="chains" value="A=4-301"/>
</dbReference>
<dbReference type="PDB" id="7Q2B">
    <property type="method" value="X-ray"/>
    <property type="resolution" value="1.85 A"/>
    <property type="chains" value="A=4-301"/>
</dbReference>
<dbReference type="PDB" id="7Q2C">
    <property type="method" value="X-ray"/>
    <property type="resolution" value="1.90 A"/>
    <property type="chains" value="A=4-301"/>
</dbReference>
<dbReference type="PDB" id="7Q2D">
    <property type="method" value="X-ray"/>
    <property type="resolution" value="1.89 A"/>
    <property type="chains" value="A=4-301"/>
</dbReference>
<dbReference type="PDB" id="7Q2E">
    <property type="method" value="X-ray"/>
    <property type="resolution" value="1.93 A"/>
    <property type="chains" value="A=4-301"/>
</dbReference>
<dbReference type="PDB" id="7Q2F">
    <property type="method" value="X-ray"/>
    <property type="resolution" value="1.85 A"/>
    <property type="chains" value="A=4-301"/>
</dbReference>
<dbReference type="PDB" id="7Q2G">
    <property type="method" value="X-ray"/>
    <property type="resolution" value="2.00 A"/>
    <property type="chains" value="A=4-301"/>
</dbReference>
<dbReference type="PDB" id="7Q2H">
    <property type="method" value="X-ray"/>
    <property type="resolution" value="1.75 A"/>
    <property type="chains" value="A=4-301"/>
</dbReference>
<dbReference type="PDBsum" id="2FK7"/>
<dbReference type="PDBsum" id="2FK8"/>
<dbReference type="PDBsum" id="3HA3"/>
<dbReference type="PDBsum" id="3HA5"/>
<dbReference type="PDBsum" id="3HA7"/>
<dbReference type="PDBsum" id="7Q2B"/>
<dbReference type="PDBsum" id="7Q2C"/>
<dbReference type="PDBsum" id="7Q2D"/>
<dbReference type="PDBsum" id="7Q2E"/>
<dbReference type="PDBsum" id="7Q2F"/>
<dbReference type="PDBsum" id="7Q2G"/>
<dbReference type="PDBsum" id="7Q2H"/>
<dbReference type="SMR" id="Q79FX8"/>
<dbReference type="FunCoup" id="Q79FX8">
    <property type="interactions" value="7"/>
</dbReference>
<dbReference type="STRING" id="83332.Rv0642c"/>
<dbReference type="DrugBank" id="DB07413">
    <property type="generic name" value="5'-S-[2-(decylamino)ethyl]-5'-thioadenosine"/>
</dbReference>
<dbReference type="PaxDb" id="83332-Rv0642c"/>
<dbReference type="DNASU" id="888056"/>
<dbReference type="GeneID" id="45424602"/>
<dbReference type="GeneID" id="888056"/>
<dbReference type="KEGG" id="mtu:Rv0642c"/>
<dbReference type="KEGG" id="mtv:RVBD_0642c"/>
<dbReference type="PATRIC" id="fig|83332.111.peg.713"/>
<dbReference type="TubercuList" id="Rv0642c"/>
<dbReference type="eggNOG" id="COG2230">
    <property type="taxonomic scope" value="Bacteria"/>
</dbReference>
<dbReference type="InParanoid" id="Q79FX8"/>
<dbReference type="OrthoDB" id="9782855at2"/>
<dbReference type="PhylomeDB" id="Q79FX8"/>
<dbReference type="UniPathway" id="UPA00915"/>
<dbReference type="EvolutionaryTrace" id="Q79FX8"/>
<dbReference type="Proteomes" id="UP000001584">
    <property type="component" value="Chromosome"/>
</dbReference>
<dbReference type="GO" id="GO:0009274">
    <property type="term" value="C:peptidoglycan-based cell wall"/>
    <property type="evidence" value="ECO:0007005"/>
    <property type="project" value="MTBBASE"/>
</dbReference>
<dbReference type="GO" id="GO:0005886">
    <property type="term" value="C:plasma membrane"/>
    <property type="evidence" value="ECO:0007005"/>
    <property type="project" value="MTBBASE"/>
</dbReference>
<dbReference type="GO" id="GO:0008825">
    <property type="term" value="F:cyclopropane-fatty-acyl-phospholipid synthase activity"/>
    <property type="evidence" value="ECO:0000318"/>
    <property type="project" value="GO_Central"/>
</dbReference>
<dbReference type="GO" id="GO:0008168">
    <property type="term" value="F:methyltransferase activity"/>
    <property type="evidence" value="ECO:0000315"/>
    <property type="project" value="UniProtKB"/>
</dbReference>
<dbReference type="GO" id="GO:0008757">
    <property type="term" value="F:S-adenosylmethionine-dependent methyltransferase activity"/>
    <property type="evidence" value="ECO:0000314"/>
    <property type="project" value="MTBBASE"/>
</dbReference>
<dbReference type="GO" id="GO:0008610">
    <property type="term" value="P:lipid biosynthetic process"/>
    <property type="evidence" value="ECO:0000318"/>
    <property type="project" value="GO_Central"/>
</dbReference>
<dbReference type="GO" id="GO:0032259">
    <property type="term" value="P:methylation"/>
    <property type="evidence" value="ECO:0007669"/>
    <property type="project" value="UniProtKB-KW"/>
</dbReference>
<dbReference type="GO" id="GO:0071768">
    <property type="term" value="P:mycolic acid biosynthetic process"/>
    <property type="evidence" value="ECO:0000314"/>
    <property type="project" value="MTBBASE"/>
</dbReference>
<dbReference type="CDD" id="cd02440">
    <property type="entry name" value="AdoMet_MTases"/>
    <property type="match status" value="1"/>
</dbReference>
<dbReference type="FunFam" id="3.40.50.150:FF:000115">
    <property type="entry name" value="Cyclopropane mycolic acid synthase 1"/>
    <property type="match status" value="1"/>
</dbReference>
<dbReference type="Gene3D" id="3.40.50.150">
    <property type="entry name" value="Vaccinia Virus protein VP39"/>
    <property type="match status" value="1"/>
</dbReference>
<dbReference type="InterPro" id="IPR050723">
    <property type="entry name" value="CFA/CMAS"/>
</dbReference>
<dbReference type="InterPro" id="IPR003333">
    <property type="entry name" value="CMAS"/>
</dbReference>
<dbReference type="InterPro" id="IPR047672">
    <property type="entry name" value="CMAS_actinobact"/>
</dbReference>
<dbReference type="InterPro" id="IPR029063">
    <property type="entry name" value="SAM-dependent_MTases_sf"/>
</dbReference>
<dbReference type="NCBIfam" id="NF040660">
    <property type="entry name" value="mycolic_MTase"/>
    <property type="match status" value="1"/>
</dbReference>
<dbReference type="PANTHER" id="PTHR43667">
    <property type="entry name" value="CYCLOPROPANE-FATTY-ACYL-PHOSPHOLIPID SYNTHASE"/>
    <property type="match status" value="1"/>
</dbReference>
<dbReference type="PANTHER" id="PTHR43667:SF1">
    <property type="entry name" value="CYCLOPROPANE-FATTY-ACYL-PHOSPHOLIPID SYNTHASE"/>
    <property type="match status" value="1"/>
</dbReference>
<dbReference type="Pfam" id="PF02353">
    <property type="entry name" value="CMAS"/>
    <property type="match status" value="1"/>
</dbReference>
<dbReference type="PIRSF" id="PIRSF003085">
    <property type="entry name" value="CMAS"/>
    <property type="match status" value="1"/>
</dbReference>
<dbReference type="SUPFAM" id="SSF53335">
    <property type="entry name" value="S-adenosyl-L-methionine-dependent methyltransferases"/>
    <property type="match status" value="1"/>
</dbReference>
<protein>
    <recommendedName>
        <fullName>Hydroxymycolate synthase MmaA4</fullName>
        <ecNumber>2.1.1.-</ecNumber>
    </recommendedName>
    <alternativeName>
        <fullName>Mycolic acid methyltransferase</fullName>
        <shortName>MA-MT</shortName>
    </alternativeName>
    <alternativeName>
        <fullName>S-adenosylmethionine-dependent methyltransferase</fullName>
        <shortName>AdoMet-MT</shortName>
        <shortName>SAM-MT</shortName>
    </alternativeName>
</protein>
<name>MMAA4_MYCTU</name>
<organism>
    <name type="scientific">Mycobacterium tuberculosis (strain ATCC 25618 / H37Rv)</name>
    <dbReference type="NCBI Taxonomy" id="83332"/>
    <lineage>
        <taxon>Bacteria</taxon>
        <taxon>Bacillati</taxon>
        <taxon>Actinomycetota</taxon>
        <taxon>Actinomycetes</taxon>
        <taxon>Mycobacteriales</taxon>
        <taxon>Mycobacteriaceae</taxon>
        <taxon>Mycobacterium</taxon>
        <taxon>Mycobacterium tuberculosis complex</taxon>
    </lineage>
</organism>
<sequence length="301" mass="34670">MTRMAEKPISPTKTRTRFEDIQAHYDVSDDFFALFQDPTRTYSCAYFEPPELTLEEAQYAKVDLNLDKLDLKPGMTLLDIGCGWGTTMRRAVERFDVNVIGLTLSKNQHARCEQVLASIDTNRSRQVLLQGWEDFAEPVDRIVSIEAFEHFGHENYDDFFKRCFNIMPADGRMTVQSSVSYHPYEMAARGKKLSFETARFIKFIVTEIFPGGRLPSTEMMVEHGEKAGFTVPEPLSLRPHYIKTLRIWGDTLQSNKDKAIEVTSEEVYNRYMKYLRGCEHYFTDEMLDCSLVTYLKPGAAA</sequence>
<feature type="chain" id="PRO_0000398365" description="Hydroxymycolate synthase MmaA4">
    <location>
        <begin position="1"/>
        <end position="301"/>
    </location>
</feature>
<feature type="active site" evidence="1">
    <location>
        <position position="278"/>
    </location>
</feature>
<feature type="binding site">
    <location>
        <begin position="42"/>
        <end position="43"/>
    </location>
    <ligand>
        <name>S-adenosyl-L-methionine</name>
        <dbReference type="ChEBI" id="CHEBI:59789"/>
    </ligand>
</feature>
<feature type="binding site">
    <location>
        <begin position="81"/>
        <end position="83"/>
    </location>
    <ligand>
        <name>S-adenosyl-L-methionine</name>
        <dbReference type="ChEBI" id="CHEBI:59789"/>
    </ligand>
</feature>
<feature type="binding site">
    <location>
        <begin position="103"/>
        <end position="108"/>
    </location>
    <ligand>
        <name>S-adenosyl-L-methionine</name>
        <dbReference type="ChEBI" id="CHEBI:59789"/>
    </ligand>
</feature>
<feature type="binding site">
    <location>
        <begin position="132"/>
        <end position="133"/>
    </location>
    <ligand>
        <name>S-adenosyl-L-methionine</name>
        <dbReference type="ChEBI" id="CHEBI:59789"/>
    </ligand>
</feature>
<feature type="binding site">
    <location>
        <position position="145"/>
    </location>
    <ligand>
        <name>S-adenosyl-L-methionine</name>
        <dbReference type="ChEBI" id="CHEBI:59789"/>
    </ligand>
</feature>
<feature type="helix" evidence="9">
    <location>
        <begin position="22"/>
        <end position="25"/>
    </location>
</feature>
<feature type="helix" evidence="9">
    <location>
        <begin position="29"/>
        <end position="32"/>
    </location>
</feature>
<feature type="turn" evidence="9">
    <location>
        <begin position="33"/>
        <end position="35"/>
    </location>
</feature>
<feature type="helix" evidence="9">
    <location>
        <begin position="54"/>
        <end position="66"/>
    </location>
</feature>
<feature type="strand" evidence="9">
    <location>
        <begin position="76"/>
        <end position="81"/>
    </location>
</feature>
<feature type="helix" evidence="9">
    <location>
        <begin position="86"/>
        <end position="95"/>
    </location>
</feature>
<feature type="strand" evidence="9">
    <location>
        <begin position="98"/>
        <end position="104"/>
    </location>
</feature>
<feature type="helix" evidence="9">
    <location>
        <begin position="106"/>
        <end position="118"/>
    </location>
</feature>
<feature type="strand" evidence="9">
    <location>
        <begin position="125"/>
        <end position="130"/>
    </location>
</feature>
<feature type="helix" evidence="9">
    <location>
        <begin position="132"/>
        <end position="134"/>
    </location>
</feature>
<feature type="strand" evidence="9">
    <location>
        <begin position="140"/>
        <end position="146"/>
    </location>
</feature>
<feature type="helix" evidence="9">
    <location>
        <begin position="148"/>
        <end position="151"/>
    </location>
</feature>
<feature type="helix" evidence="8">
    <location>
        <begin position="153"/>
        <end position="155"/>
    </location>
</feature>
<feature type="helix" evidence="9">
    <location>
        <begin position="156"/>
        <end position="166"/>
    </location>
</feature>
<feature type="strand" evidence="9">
    <location>
        <begin position="172"/>
        <end position="179"/>
    </location>
</feature>
<feature type="helix" evidence="9">
    <location>
        <begin position="183"/>
        <end position="187"/>
    </location>
</feature>
<feature type="helix" evidence="9">
    <location>
        <begin position="191"/>
        <end position="207"/>
    </location>
</feature>
<feature type="helix" evidence="9">
    <location>
        <begin position="217"/>
        <end position="226"/>
    </location>
</feature>
<feature type="helix" evidence="9">
    <location>
        <begin position="238"/>
        <end position="254"/>
    </location>
</feature>
<feature type="helix" evidence="9">
    <location>
        <begin position="256"/>
        <end position="262"/>
    </location>
</feature>
<feature type="helix" evidence="9">
    <location>
        <begin position="265"/>
        <end position="283"/>
    </location>
</feature>
<feature type="strand" evidence="9">
    <location>
        <begin position="286"/>
        <end position="295"/>
    </location>
</feature>
<keyword id="KW-0002">3D-structure</keyword>
<keyword id="KW-0444">Lipid biosynthesis</keyword>
<keyword id="KW-0443">Lipid metabolism</keyword>
<keyword id="KW-0489">Methyltransferase</keyword>
<keyword id="KW-1185">Reference proteome</keyword>
<keyword id="KW-0949">S-adenosyl-L-methionine</keyword>
<keyword id="KW-0808">Transferase</keyword>
<evidence type="ECO:0000250" key="1"/>
<evidence type="ECO:0000269" key="2">
    <source>
    </source>
</evidence>
<evidence type="ECO:0000269" key="3">
    <source>
    </source>
</evidence>
<evidence type="ECO:0000269" key="4">
    <source>
    </source>
</evidence>
<evidence type="ECO:0000269" key="5">
    <source>
    </source>
</evidence>
<evidence type="ECO:0000269" key="6">
    <source>
    </source>
</evidence>
<evidence type="ECO:0000305" key="7"/>
<evidence type="ECO:0007829" key="8">
    <source>
        <dbReference type="PDB" id="7Q2B"/>
    </source>
</evidence>
<evidence type="ECO:0007829" key="9">
    <source>
        <dbReference type="PDB" id="7Q2H"/>
    </source>
</evidence>
<comment type="function">
    <text evidence="2 3">Involved in the biosynthesis of hydroxymycolate, a common precursor of oxygenated mycolic acids (methoxy-mycolate and keto-mycolate). Probably transfers a methyl group from the S-adenosylmethionine (SAM) cofactor and, subsequently or simultaneously, a water molecule onto the double bound of ethylene substrates, leading to the formation of the hydroxylated product at the distal position. Involved in the activation of the antitubercular drug thiacetazone (TAC).</text>
</comment>
<comment type="activity regulation">
    <text evidence="6">Inhibited by S-adenosyl-N-decyl-aminoethyl (SADAE).</text>
</comment>
<comment type="pathway">
    <text>Lipid metabolism; mycolic acid biosynthesis.</text>
</comment>
<comment type="subunit">
    <text evidence="4 6">Monomer.</text>
</comment>
<comment type="mass spectrometry" mass="34561.0" method="Electrospray" evidence="4"/>
<comment type="disruption phenotype">
    <text evidence="2 3 5">Cells lacking this gene result in a decreased permeability and fluidity of the cell envelope due to a drastic difference in the mycolates pattern. The parent strain makes three types of mycolates (alpha-mycolate, methoxymycolates and ketomycolates), but the mutant contains most exclusively alpha-mycolates. The mutated strain grows more slowly in the lungs, spleen and liver of mouse and is cleared more rapidly from the liver than the wild-type strain. Cells lacking this gene show also an increased production of interleukin-12p40 which probably mediated by the mycolate-containing glycolipid trehalose 6,6'-dimycolate (TDM), which is known to be secreted as a potential immunomodulator into the cytosol of infected macrophages. Inactivation of MmaA4 confers a strong TAC resistance.</text>
</comment>
<comment type="miscellaneous">
    <text>Susceptibility of M.tuberculosis to the second-line antitubercular drug thiacetazone (TAC) requires primary activation by the monooxygenase, EthA, but is not sufficient to hit the lethal target. TAC must be secondarily modified (methylation) to its lethal form which causes growth arrest. MmaA4 activates TAC by interacting directly with TAC or with EthA to produce lethal TAC, but the methylation of the drug appears independent of MmaA4.</text>
</comment>
<comment type="similarity">
    <text evidence="7">Belongs to the CFA/CMAS family.</text>
</comment>
<gene>
    <name type="primary">mmaA4</name>
    <name type="synonym">hma</name>
    <name type="synonym">mma4</name>
    <name type="ordered locus">Rv0642c</name>
</gene>
<reference key="1">
    <citation type="journal article" date="1998" name="Nature">
        <title>Deciphering the biology of Mycobacterium tuberculosis from the complete genome sequence.</title>
        <authorList>
            <person name="Cole S.T."/>
            <person name="Brosch R."/>
            <person name="Parkhill J."/>
            <person name="Garnier T."/>
            <person name="Churcher C.M."/>
            <person name="Harris D.E."/>
            <person name="Gordon S.V."/>
            <person name="Eiglmeier K."/>
            <person name="Gas S."/>
            <person name="Barry C.E. III"/>
            <person name="Tekaia F."/>
            <person name="Badcock K."/>
            <person name="Basham D."/>
            <person name="Brown D."/>
            <person name="Chillingworth T."/>
            <person name="Connor R."/>
            <person name="Davies R.M."/>
            <person name="Devlin K."/>
            <person name="Feltwell T."/>
            <person name="Gentles S."/>
            <person name="Hamlin N."/>
            <person name="Holroyd S."/>
            <person name="Hornsby T."/>
            <person name="Jagels K."/>
            <person name="Krogh A."/>
            <person name="McLean J."/>
            <person name="Moule S."/>
            <person name="Murphy L.D."/>
            <person name="Oliver S."/>
            <person name="Osborne J."/>
            <person name="Quail M.A."/>
            <person name="Rajandream M.A."/>
            <person name="Rogers J."/>
            <person name="Rutter S."/>
            <person name="Seeger K."/>
            <person name="Skelton S."/>
            <person name="Squares S."/>
            <person name="Squares R."/>
            <person name="Sulston J.E."/>
            <person name="Taylor K."/>
            <person name="Whitehead S."/>
            <person name="Barrell B.G."/>
        </authorList>
    </citation>
    <scope>NUCLEOTIDE SEQUENCE [LARGE SCALE GENOMIC DNA]</scope>
    <source>
        <strain>ATCC 25618 / H37Rv</strain>
    </source>
</reference>
<reference key="2">
    <citation type="journal article" date="2000" name="Mol. Microbiol.">
        <title>Oxygenated mycolic acids are necessary for virulence of Mycobacterium tuberculosis in mice.</title>
        <authorList>
            <person name="Dubnau E."/>
            <person name="Chan J."/>
            <person name="Raynaud C."/>
            <person name="Mohan V.P."/>
            <person name="Laneelle M.A."/>
            <person name="Yu K."/>
            <person name="Quemard A."/>
            <person name="Smith I."/>
            <person name="Daffe M."/>
        </authorList>
    </citation>
    <scope>FUNCTION IN OXYGEN-CONTAINING MYCOLATES BIOSYNTHESIS</scope>
    <scope>DISRUPTION PHENOTYPE</scope>
    <source>
        <strain>ATCC 25618 / H37Rv</strain>
    </source>
</reference>
<reference key="3">
    <citation type="journal article" date="2003" name="J. Biol. Chem.">
        <title>Tracking the putative biosynthetic precursors of oxygenated mycolates of Mycobacterium tuberculosis. Structural analysis of fatty acids of a mutant strain deviod of methoxy- and ketomycolates.</title>
        <authorList>
            <person name="Dinadayala P."/>
            <person name="Laval F."/>
            <person name="Raynaud C."/>
            <person name="Lemassu A."/>
            <person name="Laneelle M.A."/>
            <person name="Laneelle G."/>
            <person name="Daffe M."/>
        </authorList>
    </citation>
    <scope>FUNCTION AS A HYDROXYMYCOLATE SYNTHASE</scope>
    <scope>DISRUPTION PHENOTYPE</scope>
    <source>
        <strain>ATCC 25618 / H37Rv</strain>
    </source>
</reference>
<reference key="4">
    <citation type="journal article" date="2008" name="BMC Syst. Biol.">
        <title>targetTB: a target identification pipeline for Mycobacterium tuberculosis through an interactome, reactome and genome-scale structural analysis.</title>
        <authorList>
            <person name="Raman K."/>
            <person name="Yeturu K."/>
            <person name="Chandra N."/>
        </authorList>
    </citation>
    <scope>IDENTIFICATION AS A DRUG TARGET [LARGE SCALE ANALYSIS]</scope>
    <source>
        <strain>ATCC 25618 / H37Rv</strain>
    </source>
</reference>
<reference key="5">
    <citation type="journal article" date="2008" name="PLoS Pathog.">
        <title>Mycolic acid modification by the mmaA4 gene of M. tuberculosis modulates IL-12 production.</title>
        <authorList>
            <person name="Dao D.N."/>
            <person name="Sweeney K."/>
            <person name="Hsu T."/>
            <person name="Gurcha S.S."/>
            <person name="Nascimento I.P."/>
            <person name="Roshevsky D."/>
            <person name="Besra G.S."/>
            <person name="Chan J."/>
            <person name="Porcelli S.A."/>
            <person name="Jacobs W.R."/>
        </authorList>
    </citation>
    <scope>DISRUPTION PHENOTYPE</scope>
    <source>
        <strain>ATCC 25618 / H37Rv</strain>
    </source>
</reference>
<reference key="6">
    <citation type="journal article" date="2009" name="Mol. Microbiol.">
        <title>Mycolic acid methyltransferase, MmaA4, is necessary for thiacetazone susceptibility in Mycobacterium tuberculosis.</title>
        <authorList>
            <person name="Alahari A."/>
            <person name="Alibaud L."/>
            <person name="Trivelli X."/>
            <person name="Gupta R."/>
            <person name="Lamichhane G."/>
            <person name="Reynolds R.C."/>
            <person name="Bishai W.R."/>
            <person name="Guerardel Y."/>
            <person name="Kremer L."/>
        </authorList>
    </citation>
    <scope>THIACETAZONE SUSCEPTIBILITY</scope>
    <source>
        <strain>ATCC 25618 / H37Rv</strain>
    </source>
</reference>
<reference key="7">
    <citation type="journal article" date="2011" name="Mol. Cell. Proteomics">
        <title>Proteogenomic analysis of Mycobacterium tuberculosis by high resolution mass spectrometry.</title>
        <authorList>
            <person name="Kelkar D.S."/>
            <person name="Kumar D."/>
            <person name="Kumar P."/>
            <person name="Balakrishnan L."/>
            <person name="Muthusamy B."/>
            <person name="Yadav A.K."/>
            <person name="Shrivastava P."/>
            <person name="Marimuthu A."/>
            <person name="Anand S."/>
            <person name="Sundaram H."/>
            <person name="Kingsbury R."/>
            <person name="Harsha H.C."/>
            <person name="Nair B."/>
            <person name="Prasad T.S."/>
            <person name="Chauhan D.S."/>
            <person name="Katoch K."/>
            <person name="Katoch V.M."/>
            <person name="Kumar P."/>
            <person name="Chaerkady R."/>
            <person name="Ramachandran S."/>
            <person name="Dash D."/>
            <person name="Pandey A."/>
        </authorList>
    </citation>
    <scope>IDENTIFICATION BY MASS SPECTROMETRY [LARGE SCALE ANALYSIS]</scope>
    <source>
        <strain>ATCC 25618 / H37Rv</strain>
    </source>
</reference>
<reference key="8">
    <citation type="journal article" date="2006" name="J. Biol. Chem.">
        <title>Further insight into S-adenosylmethionine-dependent methyltransferases: structural characterization of Hma, an enzyme essential for the biosynthesis of oxygenated mycolic acids in Mycobacterium tuberculosis.</title>
        <authorList>
            <person name="Boissier F."/>
            <person name="Bardou F."/>
            <person name="Guillet V."/>
            <person name="Uttenweiler-Joseph S."/>
            <person name="Daffe M."/>
            <person name="Quemard A."/>
            <person name="Mourey L."/>
        </authorList>
    </citation>
    <scope>X-RAY CRYSTALLOGRAPHY (2.0 ANGSTROMS) IN COMPLEX WITH S-ADENOSYLMETHIONINE</scope>
    <scope>SUBUNIT</scope>
    <scope>MASS SPECTROMETRY</scope>
    <source>
        <strain>ATCC 25618 / H37Rv</strain>
    </source>
</reference>
<reference key="9">
    <citation type="journal article" date="2009" name="J. Biol. Chem.">
        <title>S-adenosyl-N-decyl-aminoethyl, a potent bisubstrate inhibitor of mycobacterium tuberculosis mycolic acid methyltransferases.</title>
        <authorList>
            <person name="Vaubourgeix J."/>
            <person name="Bardou F."/>
            <person name="Boissier F."/>
            <person name="Julien S."/>
            <person name="Constant P."/>
            <person name="Ploux O."/>
            <person name="Daffe M."/>
            <person name="Quemard A."/>
            <person name="Mourey L."/>
        </authorList>
    </citation>
    <scope>X-RAY CRYSTALLOGRAPHY (2.2 ANGSTROMS) IN COMPLEX WITH S-ADENOSYLMETHIONINE ANALOG</scope>
    <scope>ACTIVITY REGULATION</scope>
    <source>
        <strain>ATCC 25618 / H37Rv</strain>
    </source>
</reference>
<accession>Q79FX8</accession>
<accession>L0T4B4</accession>